<organism>
    <name type="scientific">Danio rerio</name>
    <name type="common">Zebrafish</name>
    <name type="synonym">Brachydanio rerio</name>
    <dbReference type="NCBI Taxonomy" id="7955"/>
    <lineage>
        <taxon>Eukaryota</taxon>
        <taxon>Metazoa</taxon>
        <taxon>Chordata</taxon>
        <taxon>Craniata</taxon>
        <taxon>Vertebrata</taxon>
        <taxon>Euteleostomi</taxon>
        <taxon>Actinopterygii</taxon>
        <taxon>Neopterygii</taxon>
        <taxon>Teleostei</taxon>
        <taxon>Ostariophysi</taxon>
        <taxon>Cypriniformes</taxon>
        <taxon>Danionidae</taxon>
        <taxon>Danioninae</taxon>
        <taxon>Danio</taxon>
    </lineage>
</organism>
<comment type="function">
    <text evidence="1">Sterol-binding protein that mediates cholesterol transport from the endoplasmic reticulum to endosomes. The sterol transport mechanism is triggered by phosphorylation of FFAT motif that leads to membrane tethering between the endoplasmic reticulum and late endosomes. Acts as a lipid transfer protein that redirects sterol to the endosome at the expense of the cell membrane and favors membrane formation inside endosomes.</text>
</comment>
<comment type="catalytic activity">
    <reaction evidence="1">
        <text>cholesterol(in) = cholesterol(out)</text>
        <dbReference type="Rhea" id="RHEA:39747"/>
        <dbReference type="ChEBI" id="CHEBI:16113"/>
    </reaction>
</comment>
<comment type="subunit">
    <text evidence="1">Homodimer.</text>
</comment>
<comment type="subcellular location">
    <subcellularLocation>
        <location evidence="1">Late endosome membrane</location>
        <topology evidence="2">Multi-pass membrane protein</topology>
    </subcellularLocation>
    <text evidence="1">Localizes to contact sites between the endoplasmic reticulum and late endosomes: associates with the endoplasmic reticulum membrane via interaction with VAPA and VAPB.</text>
</comment>
<comment type="domain">
    <text evidence="1">The START domain mediates lipid-transfer between membranes. It contains a hydrophobic cavity able to accommodate one lipid molecule, thereby serving as a 'hydrophobic bridge' across the aqueous gap between donor and acceptor organelle membranes.</text>
</comment>
<comment type="domain">
    <text evidence="1">The MENTAL domain anchors the protein in endosome membranes and exposes the START domain in the cytosol.</text>
</comment>
<comment type="PTM">
    <text evidence="1">Phosphorylated. Phosphorylation allows the tethering of two membranes that participates in the formation of ER-endosome contacts. Phosphorylation of FFAT motif drives membrane tethering between the endoplasmic reticulum and late endosomes that in turn allows the efficient transport of sterol mediated by the START domain.</text>
</comment>
<comment type="similarity">
    <text evidence="5">Belongs to the STARD3 family.</text>
</comment>
<protein>
    <recommendedName>
        <fullName evidence="5">StAR-related lipid transfer protein 3</fullName>
    </recommendedName>
    <alternativeName>
        <fullName evidence="1">MLN64-like protein</fullName>
    </alternativeName>
    <alternativeName>
        <fullName evidence="1">START domain-containing protein 3</fullName>
        <shortName evidence="1">StARD3</shortName>
    </alternativeName>
</protein>
<sequence>MPSAVDYSELGGSLPAIASLNASYSQASLSLPSPYYCPLPPGERKAFSDVRRTFCLFVTFDLLFITLLWIIELNISKSIWNSLENEVVHYNFKSSFFDIFLLAVFRFLCLQLGYAAFRLRHWWVIAITTLVTTAFLIAKVILSDLFSQNAFGYVLPITSFVVAWLETWFLDFKVLTQEAEDERVYLAAVNAACEPAPLICPRPVSDGQFYSPPESLAGSEDDLDEEGLGRRAVTEQEKAFVRQGREAMAVVEQILTQEENWKFEKTNELGDAVYTLEIPFHGKTFILKGLLQCTAELVYQEVILQPEKMVQWNRTVSVCQILQRVDDNTMVSYDVSAGAAGGVVSPRDFVNVRRVERRRDCYISAGMATNHNSKPHHSRYVRGENGPGGFVVLKSSSNPSVCTFIWVLNTDLKGRLPRYLIHQSLAATMFEFMSHLRQRINEVHVSYR</sequence>
<feature type="chain" id="PRO_0000220655" description="StAR-related lipid transfer protein 3">
    <location>
        <begin position="1"/>
        <end position="448"/>
    </location>
</feature>
<feature type="transmembrane region" description="Helical" evidence="2 4">
    <location>
        <begin position="53"/>
        <end position="73"/>
    </location>
</feature>
<feature type="transmembrane region" description="Helical" evidence="2 4">
    <location>
        <begin position="96"/>
        <end position="116"/>
    </location>
</feature>
<feature type="transmembrane region" description="Helical" evidence="2 4">
    <location>
        <begin position="122"/>
        <end position="142"/>
    </location>
</feature>
<feature type="transmembrane region" description="Helical" evidence="2 4">
    <location>
        <begin position="150"/>
        <end position="170"/>
    </location>
</feature>
<feature type="domain" description="MENTAL" evidence="4">
    <location>
        <begin position="47"/>
        <end position="219"/>
    </location>
</feature>
<feature type="domain" description="START" evidence="3">
    <location>
        <begin position="232"/>
        <end position="445"/>
    </location>
</feature>
<feature type="short sequence motif" description="FFAT" evidence="1">
    <location>
        <begin position="208"/>
        <end position="214"/>
    </location>
</feature>
<feature type="sequence conflict" description="In Ref. 2." evidence="5" ref="2">
    <original>YSPPESLAGSE</original>
    <variation>PGRPRVRPRVR</variation>
    <location>
        <begin position="210"/>
        <end position="220"/>
    </location>
</feature>
<reference key="1">
    <citation type="submission" date="2003-08" db="EMBL/GenBank/DDBJ databases">
        <authorList>
            <consortium name="NIH - Zebrafish Gene Collection (ZGC) project"/>
        </authorList>
    </citation>
    <scope>NUCLEOTIDE SEQUENCE [LARGE SCALE MRNA]</scope>
    <source>
        <strain>AB</strain>
    </source>
</reference>
<reference key="2">
    <citation type="journal article" date="2000" name="Mol. Cell. Endocrinol.">
        <title>Conservation of steroidogenic acute regulatory (StAR) protein structure and expression in vertebrates.</title>
        <authorList>
            <person name="Bauer M.P."/>
            <person name="Bridgham J.T."/>
            <person name="Langenau D.M."/>
            <person name="Johnson A.L."/>
            <person name="Goetz F.W."/>
        </authorList>
    </citation>
    <scope>NUCLEOTIDE SEQUENCE [MRNA] OF 210-448</scope>
</reference>
<keyword id="KW-0967">Endosome</keyword>
<keyword id="KW-0445">Lipid transport</keyword>
<keyword id="KW-0446">Lipid-binding</keyword>
<keyword id="KW-0472">Membrane</keyword>
<keyword id="KW-0597">Phosphoprotein</keyword>
<keyword id="KW-1185">Reference proteome</keyword>
<keyword id="KW-0812">Transmembrane</keyword>
<keyword id="KW-1133">Transmembrane helix</keyword>
<keyword id="KW-0813">Transport</keyword>
<dbReference type="EMBL" id="BC056766">
    <property type="protein sequence ID" value="AAH56766.1"/>
    <property type="molecule type" value="mRNA"/>
</dbReference>
<dbReference type="EMBL" id="AF258786">
    <property type="protein sequence ID" value="AAG28603.1"/>
    <property type="molecule type" value="mRNA"/>
</dbReference>
<dbReference type="RefSeq" id="NP_571737.1">
    <property type="nucleotide sequence ID" value="NM_131662.1"/>
</dbReference>
<dbReference type="RefSeq" id="XP_005159410.1">
    <property type="nucleotide sequence ID" value="XM_005159353.5"/>
</dbReference>
<dbReference type="SMR" id="Q9DFS4"/>
<dbReference type="FunCoup" id="Q9DFS4">
    <property type="interactions" value="2483"/>
</dbReference>
<dbReference type="STRING" id="7955.ENSDARP00000007948"/>
<dbReference type="PaxDb" id="7955-ENSDARP00000007948"/>
<dbReference type="Ensembl" id="ENSDART00000003634">
    <property type="protein sequence ID" value="ENSDARP00000007948"/>
    <property type="gene ID" value="ENSDARG00000017809"/>
</dbReference>
<dbReference type="GeneID" id="63998"/>
<dbReference type="KEGG" id="dre:63998"/>
<dbReference type="AGR" id="ZFIN:ZDB-GENE-001120-2"/>
<dbReference type="CTD" id="10948"/>
<dbReference type="ZFIN" id="ZDB-GENE-001120-2">
    <property type="gene designation" value="stard3"/>
</dbReference>
<dbReference type="eggNOG" id="KOG3845">
    <property type="taxonomic scope" value="Eukaryota"/>
</dbReference>
<dbReference type="HOGENOM" id="CLU_033480_1_0_1"/>
<dbReference type="InParanoid" id="Q9DFS4"/>
<dbReference type="OMA" id="AYHMQYD"/>
<dbReference type="OrthoDB" id="5912992at2759"/>
<dbReference type="PhylomeDB" id="Q9DFS4"/>
<dbReference type="TreeFam" id="TF313869"/>
<dbReference type="Reactome" id="R-DRE-196108">
    <property type="pathway name" value="Pregnenolone biosynthesis"/>
</dbReference>
<dbReference type="PRO" id="PR:Q9DFS4"/>
<dbReference type="Proteomes" id="UP000000437">
    <property type="component" value="Chromosome 19"/>
</dbReference>
<dbReference type="Bgee" id="ENSDARG00000017809">
    <property type="expression patterns" value="Expressed in mature ovarian follicle and 28 other cell types or tissues"/>
</dbReference>
<dbReference type="ExpressionAtlas" id="Q9DFS4">
    <property type="expression patterns" value="baseline and differential"/>
</dbReference>
<dbReference type="GO" id="GO:0140284">
    <property type="term" value="C:endoplasmic reticulum-endosome membrane contact site"/>
    <property type="evidence" value="ECO:0000250"/>
    <property type="project" value="UniProtKB"/>
</dbReference>
<dbReference type="GO" id="GO:0031902">
    <property type="term" value="C:late endosome membrane"/>
    <property type="evidence" value="ECO:0000250"/>
    <property type="project" value="UniProtKB"/>
</dbReference>
<dbReference type="GO" id="GO:0044232">
    <property type="term" value="C:organelle membrane contact site"/>
    <property type="evidence" value="ECO:0000250"/>
    <property type="project" value="UniProtKB"/>
</dbReference>
<dbReference type="GO" id="GO:0015485">
    <property type="term" value="F:cholesterol binding"/>
    <property type="evidence" value="ECO:0000250"/>
    <property type="project" value="UniProtKB"/>
</dbReference>
<dbReference type="GO" id="GO:0120020">
    <property type="term" value="F:cholesterol transfer activity"/>
    <property type="evidence" value="ECO:0007669"/>
    <property type="project" value="InterPro"/>
</dbReference>
<dbReference type="GO" id="GO:0042803">
    <property type="term" value="F:protein homodimerization activity"/>
    <property type="evidence" value="ECO:0000250"/>
    <property type="project" value="UniProtKB"/>
</dbReference>
<dbReference type="GO" id="GO:0030301">
    <property type="term" value="P:cholesterol transport"/>
    <property type="evidence" value="ECO:0000250"/>
    <property type="project" value="UniProtKB"/>
</dbReference>
<dbReference type="GO" id="GO:0099044">
    <property type="term" value="P:vesicle tethering to endoplasmic reticulum"/>
    <property type="evidence" value="ECO:0000250"/>
    <property type="project" value="UniProtKB"/>
</dbReference>
<dbReference type="CDD" id="cd08906">
    <property type="entry name" value="START_STARD3-like"/>
    <property type="match status" value="1"/>
</dbReference>
<dbReference type="Gene3D" id="3.30.530.20">
    <property type="match status" value="1"/>
</dbReference>
<dbReference type="InterPro" id="IPR019498">
    <property type="entry name" value="MENTAL"/>
</dbReference>
<dbReference type="InterPro" id="IPR000799">
    <property type="entry name" value="StAR-like"/>
</dbReference>
<dbReference type="InterPro" id="IPR051869">
    <property type="entry name" value="STARD3"/>
</dbReference>
<dbReference type="InterPro" id="IPR029867">
    <property type="entry name" value="STARD3_MLN64_C"/>
</dbReference>
<dbReference type="InterPro" id="IPR023393">
    <property type="entry name" value="START-like_dom_sf"/>
</dbReference>
<dbReference type="InterPro" id="IPR002913">
    <property type="entry name" value="START_lipid-bd_dom"/>
</dbReference>
<dbReference type="PANTHER" id="PTHR46121:SF2">
    <property type="entry name" value="STAR-RELATED LIPID TRANSFER PROTEIN 3"/>
    <property type="match status" value="1"/>
</dbReference>
<dbReference type="PANTHER" id="PTHR46121">
    <property type="entry name" value="STEROIDOGENIC ACUTE REGULATORY PROTEIN-LIKE"/>
    <property type="match status" value="1"/>
</dbReference>
<dbReference type="Pfam" id="PF10457">
    <property type="entry name" value="MENTAL"/>
    <property type="match status" value="1"/>
</dbReference>
<dbReference type="Pfam" id="PF01852">
    <property type="entry name" value="START"/>
    <property type="match status" value="1"/>
</dbReference>
<dbReference type="PRINTS" id="PR00978">
    <property type="entry name" value="STARPROTEIN"/>
</dbReference>
<dbReference type="SMART" id="SM00234">
    <property type="entry name" value="START"/>
    <property type="match status" value="1"/>
</dbReference>
<dbReference type="SUPFAM" id="SSF55961">
    <property type="entry name" value="Bet v1-like"/>
    <property type="match status" value="1"/>
</dbReference>
<dbReference type="PROSITE" id="PS51439">
    <property type="entry name" value="MENTAL"/>
    <property type="match status" value="1"/>
</dbReference>
<dbReference type="PROSITE" id="PS50848">
    <property type="entry name" value="START"/>
    <property type="match status" value="1"/>
</dbReference>
<proteinExistence type="evidence at transcript level"/>
<name>STAR3_DANRE</name>
<gene>
    <name evidence="1" type="primary">stard3</name>
    <name evidence="1" type="synonym">mln64</name>
</gene>
<evidence type="ECO:0000250" key="1">
    <source>
        <dbReference type="UniProtKB" id="Q14849"/>
    </source>
</evidence>
<evidence type="ECO:0000255" key="2"/>
<evidence type="ECO:0000255" key="3">
    <source>
        <dbReference type="PROSITE-ProRule" id="PRU00197"/>
    </source>
</evidence>
<evidence type="ECO:0000255" key="4">
    <source>
        <dbReference type="PROSITE-ProRule" id="PRU00770"/>
    </source>
</evidence>
<evidence type="ECO:0000305" key="5"/>
<accession>Q9DFS4</accession>
<accession>Q6PH03</accession>